<gene>
    <name evidence="1" type="primary">nuoB</name>
    <name type="ordered locus">Dgeo_0910</name>
</gene>
<protein>
    <recommendedName>
        <fullName evidence="1">NADH-quinone oxidoreductase subunit B</fullName>
        <ecNumber evidence="1">7.1.1.-</ecNumber>
    </recommendedName>
    <alternativeName>
        <fullName evidence="1">NADH dehydrogenase I subunit B</fullName>
    </alternativeName>
    <alternativeName>
        <fullName evidence="1">NDH-1 subunit B</fullName>
    </alternativeName>
</protein>
<sequence>MALKELFDRDWQELESEGVLFSTLEKLVAWGRSNSLWPATFGLACCAIEMMSSTDGRNDLSRFGSEVFRASPRQADVMIVAGRLSKKMAPIMRRVYDQMPDPKWVISMGACASSGGMFNNYAVVQNVDHVVPVDVFVPGCPPRPEALIYAVMQLQKKVRGEAYDARGEQLPMVEAWTR</sequence>
<name>NUOB_DEIGD</name>
<comment type="function">
    <text evidence="1">NDH-1 shuttles electrons from NADH, via FMN and iron-sulfur (Fe-S) centers, to quinones in the respiratory chain. The immediate electron acceptor for the enzyme in this species is believed to be a menaquinone. Couples the redox reaction to proton translocation (for every two electrons transferred, four hydrogen ions are translocated across the cytoplasmic membrane), and thus conserves the redox energy in a proton gradient.</text>
</comment>
<comment type="catalytic activity">
    <reaction evidence="1">
        <text>a quinone + NADH + 5 H(+)(in) = a quinol + NAD(+) + 4 H(+)(out)</text>
        <dbReference type="Rhea" id="RHEA:57888"/>
        <dbReference type="ChEBI" id="CHEBI:15378"/>
        <dbReference type="ChEBI" id="CHEBI:24646"/>
        <dbReference type="ChEBI" id="CHEBI:57540"/>
        <dbReference type="ChEBI" id="CHEBI:57945"/>
        <dbReference type="ChEBI" id="CHEBI:132124"/>
    </reaction>
</comment>
<comment type="cofactor">
    <cofactor evidence="1">
        <name>[4Fe-4S] cluster</name>
        <dbReference type="ChEBI" id="CHEBI:49883"/>
    </cofactor>
    <text evidence="1">Binds 1 [4Fe-4S] cluster.</text>
</comment>
<comment type="subunit">
    <text evidence="1">NDH-1 is composed of 15 different subunits. Subunits NuoB, C, D, E, F, and G constitute the peripheral sector of the complex.</text>
</comment>
<comment type="subcellular location">
    <subcellularLocation>
        <location evidence="1">Cell membrane</location>
        <topology evidence="1">Peripheral membrane protein</topology>
        <orientation evidence="1">Cytoplasmic side</orientation>
    </subcellularLocation>
</comment>
<comment type="similarity">
    <text evidence="1">Belongs to the complex I 20 kDa subunit family.</text>
</comment>
<reference key="1">
    <citation type="submission" date="2006-04" db="EMBL/GenBank/DDBJ databases">
        <title>Complete sequence of chromosome of Deinococcus geothermalis DSM 11300.</title>
        <authorList>
            <person name="Copeland A."/>
            <person name="Lucas S."/>
            <person name="Lapidus A."/>
            <person name="Barry K."/>
            <person name="Detter J.C."/>
            <person name="Glavina del Rio T."/>
            <person name="Hammon N."/>
            <person name="Israni S."/>
            <person name="Dalin E."/>
            <person name="Tice H."/>
            <person name="Pitluck S."/>
            <person name="Brettin T."/>
            <person name="Bruce D."/>
            <person name="Han C."/>
            <person name="Tapia R."/>
            <person name="Saunders E."/>
            <person name="Gilna P."/>
            <person name="Schmutz J."/>
            <person name="Larimer F."/>
            <person name="Land M."/>
            <person name="Hauser L."/>
            <person name="Kyrpides N."/>
            <person name="Kim E."/>
            <person name="Daly M.J."/>
            <person name="Fredrickson J.K."/>
            <person name="Makarova K.S."/>
            <person name="Gaidamakova E.K."/>
            <person name="Zhai M."/>
            <person name="Richardson P."/>
        </authorList>
    </citation>
    <scope>NUCLEOTIDE SEQUENCE [LARGE SCALE GENOMIC DNA]</scope>
    <source>
        <strain>DSM 11300 / CIP 105573 / AG-3a</strain>
    </source>
</reference>
<feature type="chain" id="PRO_0000376194" description="NADH-quinone oxidoreductase subunit B">
    <location>
        <begin position="1"/>
        <end position="178"/>
    </location>
</feature>
<feature type="binding site" evidence="1">
    <location>
        <position position="45"/>
    </location>
    <ligand>
        <name>[4Fe-4S] cluster</name>
        <dbReference type="ChEBI" id="CHEBI:49883"/>
    </ligand>
</feature>
<feature type="binding site" evidence="1">
    <location>
        <position position="46"/>
    </location>
    <ligand>
        <name>[4Fe-4S] cluster</name>
        <dbReference type="ChEBI" id="CHEBI:49883"/>
    </ligand>
</feature>
<feature type="binding site" evidence="1">
    <location>
        <position position="111"/>
    </location>
    <ligand>
        <name>[4Fe-4S] cluster</name>
        <dbReference type="ChEBI" id="CHEBI:49883"/>
    </ligand>
</feature>
<feature type="binding site" evidence="1">
    <location>
        <position position="140"/>
    </location>
    <ligand>
        <name>[4Fe-4S] cluster</name>
        <dbReference type="ChEBI" id="CHEBI:49883"/>
    </ligand>
</feature>
<dbReference type="EC" id="7.1.1.-" evidence="1"/>
<dbReference type="EMBL" id="CP000359">
    <property type="protein sequence ID" value="ABF45212.1"/>
    <property type="molecule type" value="Genomic_DNA"/>
</dbReference>
<dbReference type="RefSeq" id="WP_011530050.1">
    <property type="nucleotide sequence ID" value="NC_008025.1"/>
</dbReference>
<dbReference type="SMR" id="Q1IZX2"/>
<dbReference type="STRING" id="319795.Dgeo_0910"/>
<dbReference type="KEGG" id="dge:Dgeo_0910"/>
<dbReference type="eggNOG" id="COG0377">
    <property type="taxonomic scope" value="Bacteria"/>
</dbReference>
<dbReference type="HOGENOM" id="CLU_055737_7_3_0"/>
<dbReference type="Proteomes" id="UP000002431">
    <property type="component" value="Chromosome"/>
</dbReference>
<dbReference type="GO" id="GO:0005886">
    <property type="term" value="C:plasma membrane"/>
    <property type="evidence" value="ECO:0007669"/>
    <property type="project" value="UniProtKB-SubCell"/>
</dbReference>
<dbReference type="GO" id="GO:0045271">
    <property type="term" value="C:respiratory chain complex I"/>
    <property type="evidence" value="ECO:0007669"/>
    <property type="project" value="TreeGrafter"/>
</dbReference>
<dbReference type="GO" id="GO:0051539">
    <property type="term" value="F:4 iron, 4 sulfur cluster binding"/>
    <property type="evidence" value="ECO:0007669"/>
    <property type="project" value="UniProtKB-KW"/>
</dbReference>
<dbReference type="GO" id="GO:0005506">
    <property type="term" value="F:iron ion binding"/>
    <property type="evidence" value="ECO:0007669"/>
    <property type="project" value="UniProtKB-UniRule"/>
</dbReference>
<dbReference type="GO" id="GO:0008137">
    <property type="term" value="F:NADH dehydrogenase (ubiquinone) activity"/>
    <property type="evidence" value="ECO:0007669"/>
    <property type="project" value="InterPro"/>
</dbReference>
<dbReference type="GO" id="GO:0050136">
    <property type="term" value="F:NADH:ubiquinone reductase (non-electrogenic) activity"/>
    <property type="evidence" value="ECO:0007669"/>
    <property type="project" value="UniProtKB-UniRule"/>
</dbReference>
<dbReference type="GO" id="GO:0048038">
    <property type="term" value="F:quinone binding"/>
    <property type="evidence" value="ECO:0007669"/>
    <property type="project" value="UniProtKB-KW"/>
</dbReference>
<dbReference type="GO" id="GO:0009060">
    <property type="term" value="P:aerobic respiration"/>
    <property type="evidence" value="ECO:0007669"/>
    <property type="project" value="TreeGrafter"/>
</dbReference>
<dbReference type="GO" id="GO:0015990">
    <property type="term" value="P:electron transport coupled proton transport"/>
    <property type="evidence" value="ECO:0007669"/>
    <property type="project" value="TreeGrafter"/>
</dbReference>
<dbReference type="FunFam" id="3.40.50.12280:FF:000004">
    <property type="entry name" value="NADH-quinone oxidoreductase subunit B"/>
    <property type="match status" value="1"/>
</dbReference>
<dbReference type="Gene3D" id="3.40.50.12280">
    <property type="match status" value="1"/>
</dbReference>
<dbReference type="HAMAP" id="MF_01356">
    <property type="entry name" value="NDH1_NuoB"/>
    <property type="match status" value="1"/>
</dbReference>
<dbReference type="InterPro" id="IPR006137">
    <property type="entry name" value="NADH_UbQ_OxRdtase-like_20kDa"/>
</dbReference>
<dbReference type="InterPro" id="IPR006138">
    <property type="entry name" value="NADH_UQ_OxRdtase_20Kd_su"/>
</dbReference>
<dbReference type="NCBIfam" id="TIGR01957">
    <property type="entry name" value="nuoB_fam"/>
    <property type="match status" value="1"/>
</dbReference>
<dbReference type="NCBIfam" id="NF005012">
    <property type="entry name" value="PRK06411.1"/>
    <property type="match status" value="1"/>
</dbReference>
<dbReference type="PANTHER" id="PTHR11995">
    <property type="entry name" value="NADH DEHYDROGENASE"/>
    <property type="match status" value="1"/>
</dbReference>
<dbReference type="PANTHER" id="PTHR11995:SF14">
    <property type="entry name" value="NADH DEHYDROGENASE [UBIQUINONE] IRON-SULFUR PROTEIN 7, MITOCHONDRIAL"/>
    <property type="match status" value="1"/>
</dbReference>
<dbReference type="Pfam" id="PF01058">
    <property type="entry name" value="Oxidored_q6"/>
    <property type="match status" value="1"/>
</dbReference>
<dbReference type="SUPFAM" id="SSF56770">
    <property type="entry name" value="HydA/Nqo6-like"/>
    <property type="match status" value="1"/>
</dbReference>
<dbReference type="PROSITE" id="PS01150">
    <property type="entry name" value="COMPLEX1_20K"/>
    <property type="match status" value="1"/>
</dbReference>
<evidence type="ECO:0000255" key="1">
    <source>
        <dbReference type="HAMAP-Rule" id="MF_01356"/>
    </source>
</evidence>
<accession>Q1IZX2</accession>
<organism>
    <name type="scientific">Deinococcus geothermalis (strain DSM 11300 / CIP 105573 / AG-3a)</name>
    <dbReference type="NCBI Taxonomy" id="319795"/>
    <lineage>
        <taxon>Bacteria</taxon>
        <taxon>Thermotogati</taxon>
        <taxon>Deinococcota</taxon>
        <taxon>Deinococci</taxon>
        <taxon>Deinococcales</taxon>
        <taxon>Deinococcaceae</taxon>
        <taxon>Deinococcus</taxon>
    </lineage>
</organism>
<keyword id="KW-0004">4Fe-4S</keyword>
<keyword id="KW-1003">Cell membrane</keyword>
<keyword id="KW-0408">Iron</keyword>
<keyword id="KW-0411">Iron-sulfur</keyword>
<keyword id="KW-0472">Membrane</keyword>
<keyword id="KW-0479">Metal-binding</keyword>
<keyword id="KW-0520">NAD</keyword>
<keyword id="KW-0874">Quinone</keyword>
<keyword id="KW-1278">Translocase</keyword>
<keyword id="KW-0813">Transport</keyword>
<proteinExistence type="inferred from homology"/>